<dbReference type="EC" id="1.14.14.-" evidence="4 6"/>
<dbReference type="EMBL" id="AF407572">
    <property type="protein sequence ID" value="AAL65132.1"/>
    <property type="molecule type" value="mRNA"/>
</dbReference>
<dbReference type="EMBL" id="FO080546">
    <property type="protein sequence ID" value="CCD64552.1"/>
    <property type="molecule type" value="Genomic_DNA"/>
</dbReference>
<dbReference type="EMBL" id="FO080546">
    <property type="protein sequence ID" value="CCD64553.1"/>
    <property type="molecule type" value="Genomic_DNA"/>
</dbReference>
<dbReference type="RefSeq" id="NP_001024903.1">
    <molecule id="H2KYS3-2"/>
    <property type="nucleotide sequence ID" value="NM_001029732.3"/>
</dbReference>
<dbReference type="RefSeq" id="NP_741807.2">
    <molecule id="H2KYS3-1"/>
    <property type="nucleotide sequence ID" value="NM_171699.6"/>
</dbReference>
<dbReference type="SMR" id="H2KYS3"/>
<dbReference type="BioGRID" id="45821">
    <property type="interactions" value="4"/>
</dbReference>
<dbReference type="STRING" id="6239.T13C5.1a.1"/>
<dbReference type="SwissLipids" id="SLP:000000035"/>
<dbReference type="PaxDb" id="6239-T13C5.1a"/>
<dbReference type="EnsemblMetazoa" id="T13C5.1a.1">
    <molecule id="H2KYS3-1"/>
    <property type="protein sequence ID" value="T13C5.1a.1"/>
    <property type="gene ID" value="WBGene00000905"/>
</dbReference>
<dbReference type="EnsemblMetazoa" id="T13C5.1b.1">
    <molecule id="H2KYS3-2"/>
    <property type="protein sequence ID" value="T13C5.1b.1"/>
    <property type="gene ID" value="WBGene00000905"/>
</dbReference>
<dbReference type="GeneID" id="180889"/>
<dbReference type="KEGG" id="cel:CELE_T13C5.1"/>
<dbReference type="AGR" id="WB:WBGene00000905"/>
<dbReference type="CTD" id="180889"/>
<dbReference type="WormBase" id="T13C5.1a">
    <molecule id="H2KYS3-1"/>
    <property type="protein sequence ID" value="CE27206"/>
    <property type="gene ID" value="WBGene00000905"/>
    <property type="gene designation" value="daf-9"/>
</dbReference>
<dbReference type="WormBase" id="T13C5.1b">
    <molecule id="H2KYS3-2"/>
    <property type="protein sequence ID" value="CE30451"/>
    <property type="gene ID" value="WBGene00000905"/>
    <property type="gene designation" value="daf-9"/>
</dbReference>
<dbReference type="eggNOG" id="KOG0156">
    <property type="taxonomic scope" value="Eukaryota"/>
</dbReference>
<dbReference type="InParanoid" id="H2KYS3"/>
<dbReference type="OMA" id="QGDFMSH"/>
<dbReference type="OrthoDB" id="1055148at2759"/>
<dbReference type="PhylomeDB" id="H2KYS3"/>
<dbReference type="Reactome" id="R-CEL-196791">
    <property type="pathway name" value="Vitamin D (calciferol) metabolism"/>
</dbReference>
<dbReference type="Reactome" id="R-CEL-211916">
    <property type="pathway name" value="Vitamins"/>
</dbReference>
<dbReference type="Reactome" id="R-CEL-211935">
    <property type="pathway name" value="Fatty acids"/>
</dbReference>
<dbReference type="Reactome" id="R-CEL-211945">
    <property type="pathway name" value="Phase I - Functionalization of compounds"/>
</dbReference>
<dbReference type="Reactome" id="R-CEL-211958">
    <property type="pathway name" value="Miscellaneous substrates"/>
</dbReference>
<dbReference type="Reactome" id="R-CEL-211981">
    <property type="pathway name" value="Xenobiotics"/>
</dbReference>
<dbReference type="Reactome" id="R-CEL-211999">
    <property type="pathway name" value="CYP2E1 reactions"/>
</dbReference>
<dbReference type="Reactome" id="R-CEL-2142670">
    <property type="pathway name" value="Synthesis of epoxy (EET) and dihydroxyeicosatrienoic acids (DHET)"/>
</dbReference>
<dbReference type="Reactome" id="R-CEL-2142816">
    <property type="pathway name" value="Synthesis of (16-20)-hydroxyeicosatetraenoic acids (HETE)"/>
</dbReference>
<dbReference type="Reactome" id="R-CEL-5423646">
    <property type="pathway name" value="Aflatoxin activation and detoxification"/>
</dbReference>
<dbReference type="Reactome" id="R-CEL-9027307">
    <property type="pathway name" value="Biosynthesis of maresin-like SPMs"/>
</dbReference>
<dbReference type="Reactome" id="R-CEL-9749641">
    <property type="pathway name" value="Aspirin ADME"/>
</dbReference>
<dbReference type="Reactome" id="R-CEL-9753281">
    <property type="pathway name" value="Paracetamol ADME"/>
</dbReference>
<dbReference type="UniPathway" id="UPA01020"/>
<dbReference type="PRO" id="PR:H2KYS3"/>
<dbReference type="Proteomes" id="UP000001940">
    <property type="component" value="Chromosome X"/>
</dbReference>
<dbReference type="Bgee" id="WBGene00000905">
    <property type="expression patterns" value="Expressed in larva and 1 other cell type or tissue"/>
</dbReference>
<dbReference type="ExpressionAtlas" id="H2KYS3">
    <property type="expression patterns" value="baseline and differential"/>
</dbReference>
<dbReference type="GO" id="GO:0005737">
    <property type="term" value="C:cytoplasm"/>
    <property type="evidence" value="ECO:0000314"/>
    <property type="project" value="WormBase"/>
</dbReference>
<dbReference type="GO" id="GO:0043231">
    <property type="term" value="C:intracellular membrane-bounded organelle"/>
    <property type="evidence" value="ECO:0000318"/>
    <property type="project" value="GO_Central"/>
</dbReference>
<dbReference type="GO" id="GO:0016020">
    <property type="term" value="C:membrane"/>
    <property type="evidence" value="ECO:0007669"/>
    <property type="project" value="UniProtKB-SubCell"/>
</dbReference>
<dbReference type="GO" id="GO:0043025">
    <property type="term" value="C:neuronal cell body"/>
    <property type="evidence" value="ECO:0000314"/>
    <property type="project" value="WormBase"/>
</dbReference>
<dbReference type="GO" id="GO:0048471">
    <property type="term" value="C:perinuclear region of cytoplasm"/>
    <property type="evidence" value="ECO:0000314"/>
    <property type="project" value="WormBase"/>
</dbReference>
<dbReference type="GO" id="GO:0020037">
    <property type="term" value="F:heme binding"/>
    <property type="evidence" value="ECO:0000318"/>
    <property type="project" value="GO_Central"/>
</dbReference>
<dbReference type="GO" id="GO:0005506">
    <property type="term" value="F:iron ion binding"/>
    <property type="evidence" value="ECO:0007669"/>
    <property type="project" value="InterPro"/>
</dbReference>
<dbReference type="GO" id="GO:0016712">
    <property type="term" value="F:oxidoreductase activity, acting on paired donors, with incorporation or reduction of molecular oxygen, reduced flavin or flavoprotein as one donor, and incorporation of one atom of oxygen"/>
    <property type="evidence" value="ECO:0000318"/>
    <property type="project" value="GO_Central"/>
</dbReference>
<dbReference type="GO" id="GO:0008395">
    <property type="term" value="F:steroid hydroxylase activity"/>
    <property type="evidence" value="ECO:0000318"/>
    <property type="project" value="GO_Central"/>
</dbReference>
<dbReference type="GO" id="GO:0007267">
    <property type="term" value="P:cell-cell signaling"/>
    <property type="evidence" value="ECO:0000315"/>
    <property type="project" value="WormBase"/>
</dbReference>
<dbReference type="GO" id="GO:0008203">
    <property type="term" value="P:cholesterol metabolic process"/>
    <property type="evidence" value="ECO:0007669"/>
    <property type="project" value="UniProtKB-KW"/>
</dbReference>
<dbReference type="GO" id="GO:0040024">
    <property type="term" value="P:dauer larval development"/>
    <property type="evidence" value="ECO:0000315"/>
    <property type="project" value="WormBase"/>
</dbReference>
<dbReference type="GO" id="GO:0006082">
    <property type="term" value="P:organic acid metabolic process"/>
    <property type="evidence" value="ECO:0000318"/>
    <property type="project" value="GO_Central"/>
</dbReference>
<dbReference type="GO" id="GO:0030334">
    <property type="term" value="P:regulation of cell migration"/>
    <property type="evidence" value="ECO:0000315"/>
    <property type="project" value="WormBase"/>
</dbReference>
<dbReference type="GO" id="GO:0006805">
    <property type="term" value="P:xenobiotic metabolic process"/>
    <property type="evidence" value="ECO:0000318"/>
    <property type="project" value="GO_Central"/>
</dbReference>
<dbReference type="CDD" id="cd20617">
    <property type="entry name" value="CYP1_2-like"/>
    <property type="match status" value="1"/>
</dbReference>
<dbReference type="FunFam" id="1.10.630.10:FF:000105">
    <property type="entry name" value="Cytochrome P450 daf-9"/>
    <property type="match status" value="1"/>
</dbReference>
<dbReference type="Gene3D" id="1.10.630.10">
    <property type="entry name" value="Cytochrome P450"/>
    <property type="match status" value="1"/>
</dbReference>
<dbReference type="InterPro" id="IPR001128">
    <property type="entry name" value="Cyt_P450"/>
</dbReference>
<dbReference type="InterPro" id="IPR017972">
    <property type="entry name" value="Cyt_P450_CS"/>
</dbReference>
<dbReference type="InterPro" id="IPR002401">
    <property type="entry name" value="Cyt_P450_E_grp-I"/>
</dbReference>
<dbReference type="InterPro" id="IPR036396">
    <property type="entry name" value="Cyt_P450_sf"/>
</dbReference>
<dbReference type="InterPro" id="IPR050182">
    <property type="entry name" value="Cytochrome_P450_fam2"/>
</dbReference>
<dbReference type="PANTHER" id="PTHR24300:SF403">
    <property type="entry name" value="CYTOCHROME P450 306A1"/>
    <property type="match status" value="1"/>
</dbReference>
<dbReference type="PANTHER" id="PTHR24300">
    <property type="entry name" value="CYTOCHROME P450 508A4-RELATED"/>
    <property type="match status" value="1"/>
</dbReference>
<dbReference type="Pfam" id="PF00067">
    <property type="entry name" value="p450"/>
    <property type="match status" value="1"/>
</dbReference>
<dbReference type="PRINTS" id="PR00463">
    <property type="entry name" value="EP450I"/>
</dbReference>
<dbReference type="PRINTS" id="PR00385">
    <property type="entry name" value="P450"/>
</dbReference>
<dbReference type="SUPFAM" id="SSF48264">
    <property type="entry name" value="Cytochrome P450"/>
    <property type="match status" value="1"/>
</dbReference>
<dbReference type="PROSITE" id="PS00086">
    <property type="entry name" value="CYTOCHROME_P450"/>
    <property type="match status" value="1"/>
</dbReference>
<reference key="1">
    <citation type="journal article" date="2002" name="Development">
        <title>DAF-9, a cytochrome P450 regulating C. elegans larval development and adult longevity.</title>
        <authorList>
            <person name="Jia K."/>
            <person name="Albert P.S."/>
            <person name="Riddle D.L."/>
        </authorList>
    </citation>
    <scope>NUCLEOTIDE SEQUENCE [MRNA] (ISOFORM B)</scope>
    <scope>FUNCTION</scope>
    <scope>DISRUPTION PHENOTYPE</scope>
</reference>
<reference key="2">
    <citation type="journal article" date="1998" name="Science">
        <title>Genome sequence of the nematode C. elegans: a platform for investigating biology.</title>
        <authorList>
            <consortium name="The C. elegans sequencing consortium"/>
        </authorList>
    </citation>
    <scope>NUCLEOTIDE SEQUENCE [LARGE SCALE GENOMIC DNA]</scope>
    <source>
        <strain>Bristol N2</strain>
    </source>
</reference>
<reference key="3">
    <citation type="journal article" date="1988" name="Dev. Biol.">
        <title>Mutants of Caenorhabditis elegans that form dauer-like larvae.</title>
        <authorList>
            <person name="Albert P.S."/>
            <person name="Riddle D.L."/>
        </authorList>
    </citation>
    <scope>DISRUPTION PHENOTYPE</scope>
</reference>
<reference key="4">
    <citation type="journal article" date="2003" name="Development">
        <title>SDF-9, a protein tyrosine phosphatase-like molecule, regulates the L3/dauer developmental decision through hormonal signaling in C. elegans.</title>
        <authorList>
            <person name="Ohkura K."/>
            <person name="Suzuki N."/>
            <person name="Ishihara T."/>
            <person name="Katsura I."/>
        </authorList>
    </citation>
    <scope>FUNCTION</scope>
    <scope>SUBCELLULAR LOCATION</scope>
    <scope>TISSUE SPECIFICITY</scope>
</reference>
<reference key="5">
    <citation type="journal article" date="2006" name="Cell">
        <title>Identification of ligands for DAF-12 that govern dauer formation and reproduction in C. elegans.</title>
        <authorList>
            <person name="Motola D.L."/>
            <person name="Cummins C.L."/>
            <person name="Rottiers V."/>
            <person name="Sharma K.K."/>
            <person name="Li T."/>
            <person name="Li Y."/>
            <person name="Suino-Powell K."/>
            <person name="Xu H.E."/>
            <person name="Auchus R.J."/>
            <person name="Antebi A."/>
            <person name="Mangelsdorf D.J."/>
        </authorList>
    </citation>
    <scope>FUNCTION</scope>
    <scope>CATALYTIC ACTIVITY</scope>
    <scope>PATHWAY</scope>
</reference>
<reference key="6">
    <citation type="journal article" date="2008" name="Dev. Biol.">
        <title>Insulin-like signaling negatively regulates muscle arm extension through DAF-12 in Caenorhabditis elegans.</title>
        <authorList>
            <person name="Dixon S.J."/>
            <person name="Alexander M."/>
            <person name="Chan K.K."/>
            <person name="Roy P.J."/>
        </authorList>
    </citation>
    <scope>FUNCTION</scope>
</reference>
<reference key="7">
    <citation type="journal article" date="2012" name="PLoS Biol.">
        <title>A novel 3-hydroxysteroid dehydrogenase that regulates reproductive development and longevity.</title>
        <authorList>
            <person name="Wollam J."/>
            <person name="Magner D.B."/>
            <person name="Magomedova L."/>
            <person name="Rass E."/>
            <person name="Shen Y."/>
            <person name="Rottiers V."/>
            <person name="Habermann B."/>
            <person name="Cummins C.L."/>
            <person name="Antebi A."/>
        </authorList>
    </citation>
    <scope>FUNCTION</scope>
    <scope>CATALYTIC ACTIVITY</scope>
    <scope>PATHWAY</scope>
</reference>
<reference key="8">
    <citation type="journal article" date="2014" name="Genes Nutr.">
        <title>The zinc matrix metalloproteinase ZMP-2 increases survival of Caenorhabditis elegans through interference with lipoprotein absorption.</title>
        <authorList>
            <person name="Fischer M."/>
            <person name="Fitzenberger E."/>
            <person name="Kull R."/>
            <person name="Boll M."/>
            <person name="Wenzel U."/>
        </authorList>
    </citation>
    <scope>FUNCTION</scope>
</reference>
<organism>
    <name type="scientific">Caenorhabditis elegans</name>
    <dbReference type="NCBI Taxonomy" id="6239"/>
    <lineage>
        <taxon>Eukaryota</taxon>
        <taxon>Metazoa</taxon>
        <taxon>Ecdysozoa</taxon>
        <taxon>Nematoda</taxon>
        <taxon>Chromadorea</taxon>
        <taxon>Rhabditida</taxon>
        <taxon>Rhabditina</taxon>
        <taxon>Rhabditomorpha</taxon>
        <taxon>Rhabditoidea</taxon>
        <taxon>Rhabditidae</taxon>
        <taxon>Peloderinae</taxon>
        <taxon>Caenorhabditis</taxon>
    </lineage>
</organism>
<evidence type="ECO:0000255" key="1"/>
<evidence type="ECO:0000269" key="2">
    <source>
    </source>
</evidence>
<evidence type="ECO:0000269" key="3">
    <source>
    </source>
</evidence>
<evidence type="ECO:0000269" key="4">
    <source>
    </source>
</evidence>
<evidence type="ECO:0000269" key="5">
    <source>
    </source>
</evidence>
<evidence type="ECO:0000269" key="6">
    <source>
    </source>
</evidence>
<evidence type="ECO:0000269" key="7">
    <source>
    </source>
</evidence>
<evidence type="ECO:0000269" key="8">
    <source>
    </source>
</evidence>
<evidence type="ECO:0000303" key="9">
    <source>
    </source>
</evidence>
<evidence type="ECO:0000303" key="10">
    <source>
    </source>
</evidence>
<evidence type="ECO:0000303" key="11">
    <source>
    </source>
</evidence>
<evidence type="ECO:0000305" key="12"/>
<protein>
    <recommendedName>
        <fullName>3-ketosteroid oxygenase</fullName>
        <ecNumber evidence="4 6">1.14.14.-</ecNumber>
    </recommendedName>
    <alternativeName>
        <fullName>Cytochrome P450 daf-9</fullName>
        <shortName evidence="9 10 11">DAF-9</shortName>
    </alternativeName>
</protein>
<name>DAF9_CAEEL</name>
<feature type="chain" id="PRO_0000421678" description="3-ketosteroid oxygenase">
    <location>
        <begin position="1"/>
        <end position="572"/>
    </location>
</feature>
<feature type="transmembrane region" description="Helical" evidence="1">
    <location>
        <begin position="52"/>
        <end position="72"/>
    </location>
</feature>
<feature type="transmembrane region" description="Helical" evidence="1">
    <location>
        <begin position="84"/>
        <end position="104"/>
    </location>
</feature>
<feature type="splice variant" id="VSP_045859" description="In isoform b." evidence="9">
    <original>MHLENRVLSSVLDYASKFYKRMSSLVFFSANSIQVQ</original>
    <variation>MPLVIGRFSSLSCERASIWCN</variation>
    <location>
        <begin position="1"/>
        <end position="36"/>
    </location>
</feature>
<comment type="function">
    <text evidence="2 3 4 5 6 7">Converts the 3-keto steroids 4-cholesten-3-one and lathosterone into the carboxylic metabolites 3-keto-4-cholestenate (Delta(4)-dafachronic acid, Delta(4)-DA) and 3-keto-7,(5a)-cholestenate (Delta(7)-dafachronic acid, Delta(7)-DA) respectively, by catalyzing successive oxidations at C-26 (PubMed:16529801, PubMed:22505847). Dafachronic acids bind directly to the nuclear hormone receptor (NHR) DAF-12, suppressing dauer formation and inducing reproductive growth (PubMed:11782415, PubMed:12783794, PubMed:16529801, PubMed:22505847). In a non-cell autonomous manner, negatively regulates body wall muscle arm extensions to motor neurons probably by preventing daf-12 isoform b activation (PubMed:18436204). May be involved in thermotolerance (PubMed:24957743).</text>
</comment>
<comment type="catalytic activity">
    <reaction evidence="4 6">
        <text>5alpha-cholest-7-en-3-one + 3 reduced [NADPH--hemoprotein reductase] + 3 O2 = (25S)-Delta7-dafachronate + 3 oxidized [NADPH--hemoprotein reductase] + 4 H2O + 4 H(+)</text>
        <dbReference type="Rhea" id="RHEA:66620"/>
        <dbReference type="Rhea" id="RHEA-COMP:11964"/>
        <dbReference type="Rhea" id="RHEA-COMP:11965"/>
        <dbReference type="ChEBI" id="CHEBI:15377"/>
        <dbReference type="ChEBI" id="CHEBI:15378"/>
        <dbReference type="ChEBI" id="CHEBI:15379"/>
        <dbReference type="ChEBI" id="CHEBI:57618"/>
        <dbReference type="ChEBI" id="CHEBI:58210"/>
        <dbReference type="ChEBI" id="CHEBI:71542"/>
        <dbReference type="ChEBI" id="CHEBI:71550"/>
    </reaction>
    <physiologicalReaction direction="left-to-right" evidence="4 6">
        <dbReference type="Rhea" id="RHEA:66621"/>
    </physiologicalReaction>
</comment>
<comment type="catalytic activity">
    <reaction evidence="4 6">
        <text>cholest-4-en-3-one + 3 reduced [NADPH--hemoprotein reductase] + 3 O2 = (25S)-3-oxocholest-4-en-26-oate + 3 oxidized [NADPH--hemoprotein reductase] + 4 H2O + 4 H(+)</text>
        <dbReference type="Rhea" id="RHEA:66624"/>
        <dbReference type="Rhea" id="RHEA-COMP:11964"/>
        <dbReference type="Rhea" id="RHEA-COMP:11965"/>
        <dbReference type="ChEBI" id="CHEBI:15377"/>
        <dbReference type="ChEBI" id="CHEBI:15378"/>
        <dbReference type="ChEBI" id="CHEBI:15379"/>
        <dbReference type="ChEBI" id="CHEBI:16175"/>
        <dbReference type="ChEBI" id="CHEBI:57618"/>
        <dbReference type="ChEBI" id="CHEBI:58210"/>
        <dbReference type="ChEBI" id="CHEBI:71541"/>
    </reaction>
    <physiologicalReaction direction="left-to-right" evidence="4 6">
        <dbReference type="Rhea" id="RHEA:66625"/>
    </physiologicalReaction>
</comment>
<comment type="pathway">
    <text evidence="4 6">Steroid hormone biosynthesis; dafachronic acid biosynthesis.</text>
</comment>
<comment type="subcellular location">
    <subcellularLocation>
        <location evidence="12">Membrane</location>
        <topology evidence="12">Multi-pass membrane protein</topology>
    </subcellularLocation>
    <text evidence="3">Localizes to dendrite-like structure in XXXL/R cells.</text>
</comment>
<comment type="alternative products">
    <event type="alternative splicing"/>
    <isoform>
        <id>H2KYS3-1</id>
        <name>a</name>
        <sequence type="displayed"/>
    </isoform>
    <isoform>
        <id>H2KYS3-2</id>
        <name>b</name>
        <sequence type="described" ref="VSP_045859"/>
    </isoform>
</comment>
<comment type="tissue specificity">
    <text evidence="3">Expressed in the 2 embryonic head hypodermal cells XXXL/R.</text>
</comment>
<comment type="disruption phenotype">
    <text evidence="2 8">The daf-9 mutant is dauer-like in head shape, cuticle, and deirid ultrastructure, intermediate in amphid and inner labial neuron morphology, and nondauer or abnormal in the intestine (PubMed:3350212). Also, the daf-9 mutant exhibits abnormal reproductive development, molting defects and increased adult longevity (PubMed:11782415).</text>
</comment>
<comment type="similarity">
    <text evidence="12">Belongs to the cytochrome P450 family.</text>
</comment>
<keyword id="KW-0025">Alternative splicing</keyword>
<keyword id="KW-0153">Cholesterol metabolism</keyword>
<keyword id="KW-0349">Heme</keyword>
<keyword id="KW-0408">Iron</keyword>
<keyword id="KW-0443">Lipid metabolism</keyword>
<keyword id="KW-0472">Membrane</keyword>
<keyword id="KW-0479">Metal-binding</keyword>
<keyword id="KW-0503">Monooxygenase</keyword>
<keyword id="KW-0560">Oxidoreductase</keyword>
<keyword id="KW-1185">Reference proteome</keyword>
<keyword id="KW-0753">Steroid metabolism</keyword>
<keyword id="KW-1207">Sterol metabolism</keyword>
<keyword id="KW-0812">Transmembrane</keyword>
<keyword id="KW-1133">Transmembrane helix</keyword>
<proteinExistence type="evidence at protein level"/>
<gene>
    <name type="primary">daf-9</name>
    <name type="ORF">T13C5.1</name>
</gene>
<accession>H2KYS3</accession>
<accession>G5ECA9</accession>
<sequence length="572" mass="66598">MHLENRVLSSVLDYASKFYKRMSSLVFFSANSIQVQMNISQSSWIKCRDWMAFALSHHIIMGIYLLILRNFLPQVVPDFEWQHYFMRVFIVHIIYIIISYFIRITRYPPGPPPMAVFGNSPFVNILTPEQTFLEYREIYGPIFTLHLSQPTIILAEYKTIQEALVKNGQQTSGRSSAESFVLFTGDRLNGDGVILAMRQKWKDMRHEISRFMNKWYGAPMDELVLHHTRCLEQELAKIAETKSLIDLRDPLAGAIANVIQQITIGRNYMYQDQEFQTQLRDINAVVKEIMTAEVFFVNCYPWLRYLPEGILRKWTNYKRSGFRLQQWFRTILEEHHVNRHQGDFMSHMIDLQESKQEQFRDLSIILTCGDMWTGGMETTVTTLRWGIIYLLNNPEVQAKCQMEILDVFGNDIPDMGKMNQTPYVRATLSEIQRLANVLPWAIPHKTIEECNIGGYDIPVNTEIIPALGAVLFDPNVFESPKQFKPERFLDEEGKYRVMEEFRPFGLGPRVCLGERIARTELYLIFASLLQNFRFYLNRGDPIPVAERVIGGITAPPKPYATRVEYLGNRLIN</sequence>